<gene>
    <name evidence="1" type="primary">miaA</name>
    <name type="ordered locus">SAV1304</name>
</gene>
<evidence type="ECO:0000255" key="1">
    <source>
        <dbReference type="HAMAP-Rule" id="MF_00185"/>
    </source>
</evidence>
<proteinExistence type="inferred from homology"/>
<protein>
    <recommendedName>
        <fullName evidence="1">tRNA dimethylallyltransferase</fullName>
        <ecNumber evidence="1">2.5.1.75</ecNumber>
    </recommendedName>
    <alternativeName>
        <fullName evidence="1">Dimethylallyl diphosphate:tRNA dimethylallyltransferase</fullName>
        <shortName evidence="1">DMAPP:tRNA dimethylallyltransferase</shortName>
        <shortName evidence="1">DMATase</shortName>
    </alternativeName>
    <alternativeName>
        <fullName evidence="1">Isopentenyl-diphosphate:tRNA isopentenyltransferase</fullName>
        <shortName evidence="1">IPP transferase</shortName>
        <shortName evidence="1">IPPT</shortName>
        <shortName evidence="1">IPTase</shortName>
    </alternativeName>
</protein>
<keyword id="KW-0067">ATP-binding</keyword>
<keyword id="KW-0460">Magnesium</keyword>
<keyword id="KW-0547">Nucleotide-binding</keyword>
<keyword id="KW-0808">Transferase</keyword>
<keyword id="KW-0819">tRNA processing</keyword>
<comment type="function">
    <text evidence="1">Catalyzes the transfer of a dimethylallyl group onto the adenine at position 37 in tRNAs that read codons beginning with uridine, leading to the formation of N6-(dimethylallyl)adenosine (i(6)A).</text>
</comment>
<comment type="catalytic activity">
    <reaction evidence="1">
        <text>adenosine(37) in tRNA + dimethylallyl diphosphate = N(6)-dimethylallyladenosine(37) in tRNA + diphosphate</text>
        <dbReference type="Rhea" id="RHEA:26482"/>
        <dbReference type="Rhea" id="RHEA-COMP:10162"/>
        <dbReference type="Rhea" id="RHEA-COMP:10375"/>
        <dbReference type="ChEBI" id="CHEBI:33019"/>
        <dbReference type="ChEBI" id="CHEBI:57623"/>
        <dbReference type="ChEBI" id="CHEBI:74411"/>
        <dbReference type="ChEBI" id="CHEBI:74415"/>
        <dbReference type="EC" id="2.5.1.75"/>
    </reaction>
</comment>
<comment type="cofactor">
    <cofactor evidence="1">
        <name>Mg(2+)</name>
        <dbReference type="ChEBI" id="CHEBI:18420"/>
    </cofactor>
</comment>
<comment type="subunit">
    <text evidence="1">Monomer.</text>
</comment>
<comment type="similarity">
    <text evidence="1">Belongs to the IPP transferase family.</text>
</comment>
<feature type="chain" id="PRO_0000163973" description="tRNA dimethylallyltransferase">
    <location>
        <begin position="1"/>
        <end position="311"/>
    </location>
</feature>
<feature type="region of interest" description="Interaction with substrate tRNA" evidence="1">
    <location>
        <begin position="38"/>
        <end position="41"/>
    </location>
</feature>
<feature type="region of interest" description="Interaction with substrate tRNA" evidence="1">
    <location>
        <begin position="166"/>
        <end position="170"/>
    </location>
</feature>
<feature type="binding site" evidence="1">
    <location>
        <begin position="13"/>
        <end position="20"/>
    </location>
    <ligand>
        <name>ATP</name>
        <dbReference type="ChEBI" id="CHEBI:30616"/>
    </ligand>
</feature>
<feature type="binding site" evidence="1">
    <location>
        <begin position="15"/>
        <end position="20"/>
    </location>
    <ligand>
        <name>substrate</name>
    </ligand>
</feature>
<feature type="site" description="Interaction with substrate tRNA" evidence="1">
    <location>
        <position position="104"/>
    </location>
</feature>
<organism>
    <name type="scientific">Staphylococcus aureus (strain Mu50 / ATCC 700699)</name>
    <dbReference type="NCBI Taxonomy" id="158878"/>
    <lineage>
        <taxon>Bacteria</taxon>
        <taxon>Bacillati</taxon>
        <taxon>Bacillota</taxon>
        <taxon>Bacilli</taxon>
        <taxon>Bacillales</taxon>
        <taxon>Staphylococcaceae</taxon>
        <taxon>Staphylococcus</taxon>
    </lineage>
</organism>
<accession>P65354</accession>
<accession>Q99UH0</accession>
<reference key="1">
    <citation type="journal article" date="2001" name="Lancet">
        <title>Whole genome sequencing of meticillin-resistant Staphylococcus aureus.</title>
        <authorList>
            <person name="Kuroda M."/>
            <person name="Ohta T."/>
            <person name="Uchiyama I."/>
            <person name="Baba T."/>
            <person name="Yuzawa H."/>
            <person name="Kobayashi I."/>
            <person name="Cui L."/>
            <person name="Oguchi A."/>
            <person name="Aoki K."/>
            <person name="Nagai Y."/>
            <person name="Lian J.-Q."/>
            <person name="Ito T."/>
            <person name="Kanamori M."/>
            <person name="Matsumaru H."/>
            <person name="Maruyama A."/>
            <person name="Murakami H."/>
            <person name="Hosoyama A."/>
            <person name="Mizutani-Ui Y."/>
            <person name="Takahashi N.K."/>
            <person name="Sawano T."/>
            <person name="Inoue R."/>
            <person name="Kaito C."/>
            <person name="Sekimizu K."/>
            <person name="Hirakawa H."/>
            <person name="Kuhara S."/>
            <person name="Goto S."/>
            <person name="Yabuzaki J."/>
            <person name="Kanehisa M."/>
            <person name="Yamashita A."/>
            <person name="Oshima K."/>
            <person name="Furuya K."/>
            <person name="Yoshino C."/>
            <person name="Shiba T."/>
            <person name="Hattori M."/>
            <person name="Ogasawara N."/>
            <person name="Hayashi H."/>
            <person name="Hiramatsu K."/>
        </authorList>
    </citation>
    <scope>NUCLEOTIDE SEQUENCE [LARGE SCALE GENOMIC DNA]</scope>
    <source>
        <strain>Mu50 / ATCC 700699</strain>
    </source>
</reference>
<name>MIAA_STAAM</name>
<dbReference type="EC" id="2.5.1.75" evidence="1"/>
<dbReference type="EMBL" id="BA000017">
    <property type="protein sequence ID" value="BAB57466.1"/>
    <property type="molecule type" value="Genomic_DNA"/>
</dbReference>
<dbReference type="RefSeq" id="WP_001548613.1">
    <property type="nucleotide sequence ID" value="NC_002758.2"/>
</dbReference>
<dbReference type="SMR" id="P65354"/>
<dbReference type="KEGG" id="sav:SAV1304"/>
<dbReference type="HOGENOM" id="CLU_032616_0_1_9"/>
<dbReference type="PhylomeDB" id="P65354"/>
<dbReference type="Proteomes" id="UP000002481">
    <property type="component" value="Chromosome"/>
</dbReference>
<dbReference type="GO" id="GO:0005524">
    <property type="term" value="F:ATP binding"/>
    <property type="evidence" value="ECO:0007669"/>
    <property type="project" value="UniProtKB-UniRule"/>
</dbReference>
<dbReference type="GO" id="GO:0052381">
    <property type="term" value="F:tRNA dimethylallyltransferase activity"/>
    <property type="evidence" value="ECO:0007669"/>
    <property type="project" value="UniProtKB-UniRule"/>
</dbReference>
<dbReference type="GO" id="GO:0006400">
    <property type="term" value="P:tRNA modification"/>
    <property type="evidence" value="ECO:0007669"/>
    <property type="project" value="TreeGrafter"/>
</dbReference>
<dbReference type="FunFam" id="1.10.20.140:FF:000004">
    <property type="entry name" value="tRNA dimethylallyltransferase"/>
    <property type="match status" value="1"/>
</dbReference>
<dbReference type="Gene3D" id="1.10.20.140">
    <property type="match status" value="1"/>
</dbReference>
<dbReference type="Gene3D" id="3.40.50.300">
    <property type="entry name" value="P-loop containing nucleotide triphosphate hydrolases"/>
    <property type="match status" value="1"/>
</dbReference>
<dbReference type="HAMAP" id="MF_00185">
    <property type="entry name" value="IPP_trans"/>
    <property type="match status" value="1"/>
</dbReference>
<dbReference type="InterPro" id="IPR039657">
    <property type="entry name" value="Dimethylallyltransferase"/>
</dbReference>
<dbReference type="InterPro" id="IPR018022">
    <property type="entry name" value="IPT"/>
</dbReference>
<dbReference type="InterPro" id="IPR027417">
    <property type="entry name" value="P-loop_NTPase"/>
</dbReference>
<dbReference type="NCBIfam" id="TIGR00174">
    <property type="entry name" value="miaA"/>
    <property type="match status" value="1"/>
</dbReference>
<dbReference type="PANTHER" id="PTHR11088">
    <property type="entry name" value="TRNA DIMETHYLALLYLTRANSFERASE"/>
    <property type="match status" value="1"/>
</dbReference>
<dbReference type="PANTHER" id="PTHR11088:SF60">
    <property type="entry name" value="TRNA DIMETHYLALLYLTRANSFERASE"/>
    <property type="match status" value="1"/>
</dbReference>
<dbReference type="Pfam" id="PF01715">
    <property type="entry name" value="IPPT"/>
    <property type="match status" value="1"/>
</dbReference>
<dbReference type="SUPFAM" id="SSF52540">
    <property type="entry name" value="P-loop containing nucleoside triphosphate hydrolases"/>
    <property type="match status" value="2"/>
</dbReference>
<sequence>MNKNKPFIVVIVGPTASGKTELSIELAKRINGEIISGDSMQVYKHMNIGTAKVTPEEMDGIPHHLIDILNPDDTFSAYEFKRLAEDLITDITNRGKVPIIAGGTGLYIQSLIYNYELEDETVTPAQLSIVKQKLSALEHLDNQQLHDYLAQFDAVSAENIHPNNRQRVLRAIEYYLKTKKLLSNRKKVQQFTENYDTLLLGIEMSRKTLYSRINKRVDIMLDHGLFREVQQLVEQGYESCQSMQAIGYKELIPVINGQMIYEDAVNDLKQHSRQYAKRQMTWFKNKMSVHWLDKENMSLQMMLDEITTQIK</sequence>